<protein>
    <recommendedName>
        <fullName evidence="1">Ribosome-recycling factor</fullName>
        <shortName evidence="1">RRF</shortName>
    </recommendedName>
    <alternativeName>
        <fullName evidence="1">Ribosome-releasing factor</fullName>
    </alternativeName>
</protein>
<gene>
    <name evidence="1" type="primary">frr</name>
    <name type="ordered locus">BU234</name>
</gene>
<keyword id="KW-0963">Cytoplasm</keyword>
<keyword id="KW-0648">Protein biosynthesis</keyword>
<keyword id="KW-1185">Reference proteome</keyword>
<reference key="1">
    <citation type="journal article" date="2000" name="Nature">
        <title>Genome sequence of the endocellular bacterial symbiont of aphids Buchnera sp. APS.</title>
        <authorList>
            <person name="Shigenobu S."/>
            <person name="Watanabe H."/>
            <person name="Hattori M."/>
            <person name="Sakaki Y."/>
            <person name="Ishikawa H."/>
        </authorList>
    </citation>
    <scope>NUCLEOTIDE SEQUENCE [LARGE SCALE GENOMIC DNA]</scope>
    <source>
        <strain>APS</strain>
    </source>
</reference>
<accession>P57328</accession>
<feature type="chain" id="PRO_0000167428" description="Ribosome-recycling factor">
    <location>
        <begin position="1"/>
        <end position="185"/>
    </location>
</feature>
<sequence length="185" mass="21609">MINQIDIKTRERMEACIQTFHNNITNIKTGRASPTLLHNIYIEYFGSKTPLRQVSNIIVEDSHTLKINVFDDSITSLIRKSILNSNLDLNPVLQGKDIIIPIPRLTEERRKQLIKVIRGDAESSRIQIRNIRRDANDKVKRLLKDKIISEDNEHTSQSKIQIMTNEYIKKIDCILEKKEKELMKF</sequence>
<proteinExistence type="inferred from homology"/>
<comment type="function">
    <text evidence="1">Responsible for the release of ribosomes from messenger RNA at the termination of protein biosynthesis. May increase the efficiency of translation by recycling ribosomes from one round of translation to another.</text>
</comment>
<comment type="subcellular location">
    <subcellularLocation>
        <location evidence="1">Cytoplasm</location>
    </subcellularLocation>
</comment>
<comment type="similarity">
    <text evidence="1">Belongs to the RRF family.</text>
</comment>
<dbReference type="EMBL" id="BA000003">
    <property type="protein sequence ID" value="BAB12949.1"/>
    <property type="molecule type" value="Genomic_DNA"/>
</dbReference>
<dbReference type="RefSeq" id="NP_240063.1">
    <property type="nucleotide sequence ID" value="NC_002528.1"/>
</dbReference>
<dbReference type="RefSeq" id="WP_010896017.1">
    <property type="nucleotide sequence ID" value="NC_002528.1"/>
</dbReference>
<dbReference type="SMR" id="P57328"/>
<dbReference type="STRING" id="563178.BUAP5A_229"/>
<dbReference type="EnsemblBacteria" id="BAB12949">
    <property type="protein sequence ID" value="BAB12949"/>
    <property type="gene ID" value="BAB12949"/>
</dbReference>
<dbReference type="KEGG" id="buc:BU234"/>
<dbReference type="PATRIC" id="fig|107806.10.peg.247"/>
<dbReference type="eggNOG" id="COG0233">
    <property type="taxonomic scope" value="Bacteria"/>
</dbReference>
<dbReference type="HOGENOM" id="CLU_073981_2_1_6"/>
<dbReference type="Proteomes" id="UP000001806">
    <property type="component" value="Chromosome"/>
</dbReference>
<dbReference type="GO" id="GO:0005829">
    <property type="term" value="C:cytosol"/>
    <property type="evidence" value="ECO:0007669"/>
    <property type="project" value="GOC"/>
</dbReference>
<dbReference type="GO" id="GO:0043023">
    <property type="term" value="F:ribosomal large subunit binding"/>
    <property type="evidence" value="ECO:0007669"/>
    <property type="project" value="TreeGrafter"/>
</dbReference>
<dbReference type="GO" id="GO:0002184">
    <property type="term" value="P:cytoplasmic translational termination"/>
    <property type="evidence" value="ECO:0007669"/>
    <property type="project" value="TreeGrafter"/>
</dbReference>
<dbReference type="CDD" id="cd00520">
    <property type="entry name" value="RRF"/>
    <property type="match status" value="1"/>
</dbReference>
<dbReference type="FunFam" id="1.10.132.20:FF:000001">
    <property type="entry name" value="Ribosome-recycling factor"/>
    <property type="match status" value="1"/>
</dbReference>
<dbReference type="FunFam" id="3.30.1360.40:FF:000001">
    <property type="entry name" value="Ribosome-recycling factor"/>
    <property type="match status" value="1"/>
</dbReference>
<dbReference type="Gene3D" id="3.30.1360.40">
    <property type="match status" value="1"/>
</dbReference>
<dbReference type="Gene3D" id="1.10.132.20">
    <property type="entry name" value="Ribosome-recycling factor"/>
    <property type="match status" value="1"/>
</dbReference>
<dbReference type="HAMAP" id="MF_00040">
    <property type="entry name" value="RRF"/>
    <property type="match status" value="1"/>
</dbReference>
<dbReference type="InterPro" id="IPR002661">
    <property type="entry name" value="Ribosome_recyc_fac"/>
</dbReference>
<dbReference type="InterPro" id="IPR023584">
    <property type="entry name" value="Ribosome_recyc_fac_dom"/>
</dbReference>
<dbReference type="InterPro" id="IPR036191">
    <property type="entry name" value="RRF_sf"/>
</dbReference>
<dbReference type="NCBIfam" id="TIGR00496">
    <property type="entry name" value="frr"/>
    <property type="match status" value="1"/>
</dbReference>
<dbReference type="PANTHER" id="PTHR20982:SF3">
    <property type="entry name" value="MITOCHONDRIAL RIBOSOME RECYCLING FACTOR PSEUDO 1"/>
    <property type="match status" value="1"/>
</dbReference>
<dbReference type="PANTHER" id="PTHR20982">
    <property type="entry name" value="RIBOSOME RECYCLING FACTOR"/>
    <property type="match status" value="1"/>
</dbReference>
<dbReference type="Pfam" id="PF01765">
    <property type="entry name" value="RRF"/>
    <property type="match status" value="1"/>
</dbReference>
<dbReference type="SUPFAM" id="SSF55194">
    <property type="entry name" value="Ribosome recycling factor, RRF"/>
    <property type="match status" value="1"/>
</dbReference>
<name>RRF_BUCAI</name>
<evidence type="ECO:0000255" key="1">
    <source>
        <dbReference type="HAMAP-Rule" id="MF_00040"/>
    </source>
</evidence>
<organism>
    <name type="scientific">Buchnera aphidicola subsp. Acyrthosiphon pisum (strain APS)</name>
    <name type="common">Acyrthosiphon pisum symbiotic bacterium</name>
    <dbReference type="NCBI Taxonomy" id="107806"/>
    <lineage>
        <taxon>Bacteria</taxon>
        <taxon>Pseudomonadati</taxon>
        <taxon>Pseudomonadota</taxon>
        <taxon>Gammaproteobacteria</taxon>
        <taxon>Enterobacterales</taxon>
        <taxon>Erwiniaceae</taxon>
        <taxon>Buchnera</taxon>
    </lineage>
</organism>